<evidence type="ECO:0000255" key="1">
    <source>
        <dbReference type="HAMAP-Rule" id="MF_00605"/>
    </source>
</evidence>
<comment type="function">
    <text evidence="1">Specifically methylates guanosine-37 in various tRNAs.</text>
</comment>
<comment type="catalytic activity">
    <reaction evidence="1">
        <text>guanosine(37) in tRNA + S-adenosyl-L-methionine = N(1)-methylguanosine(37) in tRNA + S-adenosyl-L-homocysteine + H(+)</text>
        <dbReference type="Rhea" id="RHEA:36899"/>
        <dbReference type="Rhea" id="RHEA-COMP:10145"/>
        <dbReference type="Rhea" id="RHEA-COMP:10147"/>
        <dbReference type="ChEBI" id="CHEBI:15378"/>
        <dbReference type="ChEBI" id="CHEBI:57856"/>
        <dbReference type="ChEBI" id="CHEBI:59789"/>
        <dbReference type="ChEBI" id="CHEBI:73542"/>
        <dbReference type="ChEBI" id="CHEBI:74269"/>
        <dbReference type="EC" id="2.1.1.228"/>
    </reaction>
</comment>
<comment type="subunit">
    <text evidence="1">Homodimer.</text>
</comment>
<comment type="subcellular location">
    <subcellularLocation>
        <location evidence="1">Cytoplasm</location>
    </subcellularLocation>
</comment>
<comment type="similarity">
    <text evidence="1">Belongs to the RNA methyltransferase TrmD family.</text>
</comment>
<proteinExistence type="inferred from homology"/>
<name>TRMD_XANOM</name>
<gene>
    <name evidence="1" type="primary">trmD</name>
    <name type="ordered locus">XOO1221</name>
</gene>
<reference key="1">
    <citation type="journal article" date="2005" name="Jpn. Agric. Res. Q.">
        <title>Genome sequence of Xanthomonas oryzae pv. oryzae suggests contribution of large numbers of effector genes and insertion sequences to its race diversity.</title>
        <authorList>
            <person name="Ochiai H."/>
            <person name="Inoue Y."/>
            <person name="Takeya M."/>
            <person name="Sasaki A."/>
            <person name="Kaku H."/>
        </authorList>
    </citation>
    <scope>NUCLEOTIDE SEQUENCE [LARGE SCALE GENOMIC DNA]</scope>
    <source>
        <strain>MAFF 311018</strain>
    </source>
</reference>
<dbReference type="EC" id="2.1.1.228" evidence="1"/>
<dbReference type="EMBL" id="AP008229">
    <property type="protein sequence ID" value="BAE67976.1"/>
    <property type="molecule type" value="Genomic_DNA"/>
</dbReference>
<dbReference type="RefSeq" id="WP_011407910.1">
    <property type="nucleotide sequence ID" value="NC_007705.1"/>
</dbReference>
<dbReference type="SMR" id="Q2P651"/>
<dbReference type="KEGG" id="xom:XOO1221"/>
<dbReference type="HOGENOM" id="CLU_047363_0_1_6"/>
<dbReference type="GO" id="GO:0005829">
    <property type="term" value="C:cytosol"/>
    <property type="evidence" value="ECO:0007669"/>
    <property type="project" value="TreeGrafter"/>
</dbReference>
<dbReference type="GO" id="GO:0052906">
    <property type="term" value="F:tRNA (guanine(37)-N1)-methyltransferase activity"/>
    <property type="evidence" value="ECO:0007669"/>
    <property type="project" value="UniProtKB-UniRule"/>
</dbReference>
<dbReference type="GO" id="GO:0002939">
    <property type="term" value="P:tRNA N1-guanine methylation"/>
    <property type="evidence" value="ECO:0007669"/>
    <property type="project" value="TreeGrafter"/>
</dbReference>
<dbReference type="CDD" id="cd18080">
    <property type="entry name" value="TrmD-like"/>
    <property type="match status" value="1"/>
</dbReference>
<dbReference type="FunFam" id="1.10.1270.20:FF:000001">
    <property type="entry name" value="tRNA (guanine-N(1)-)-methyltransferase"/>
    <property type="match status" value="1"/>
</dbReference>
<dbReference type="FunFam" id="3.40.1280.10:FF:000001">
    <property type="entry name" value="tRNA (guanine-N(1)-)-methyltransferase"/>
    <property type="match status" value="1"/>
</dbReference>
<dbReference type="Gene3D" id="3.40.1280.10">
    <property type="match status" value="1"/>
</dbReference>
<dbReference type="Gene3D" id="1.10.1270.20">
    <property type="entry name" value="tRNA(m1g37)methyltransferase, domain 2"/>
    <property type="match status" value="1"/>
</dbReference>
<dbReference type="HAMAP" id="MF_00605">
    <property type="entry name" value="TrmD"/>
    <property type="match status" value="1"/>
</dbReference>
<dbReference type="InterPro" id="IPR029028">
    <property type="entry name" value="Alpha/beta_knot_MTases"/>
</dbReference>
<dbReference type="InterPro" id="IPR023148">
    <property type="entry name" value="tRNA_m1G_MeTrfase_C_sf"/>
</dbReference>
<dbReference type="InterPro" id="IPR002649">
    <property type="entry name" value="tRNA_m1G_MeTrfase_TrmD"/>
</dbReference>
<dbReference type="InterPro" id="IPR029026">
    <property type="entry name" value="tRNA_m1G_MTases_N"/>
</dbReference>
<dbReference type="InterPro" id="IPR016009">
    <property type="entry name" value="tRNA_MeTrfase_TRMD/TRM10"/>
</dbReference>
<dbReference type="NCBIfam" id="NF000648">
    <property type="entry name" value="PRK00026.1"/>
    <property type="match status" value="1"/>
</dbReference>
<dbReference type="NCBIfam" id="TIGR00088">
    <property type="entry name" value="trmD"/>
    <property type="match status" value="1"/>
</dbReference>
<dbReference type="PANTHER" id="PTHR46417">
    <property type="entry name" value="TRNA (GUANINE-N(1)-)-METHYLTRANSFERASE"/>
    <property type="match status" value="1"/>
</dbReference>
<dbReference type="PANTHER" id="PTHR46417:SF1">
    <property type="entry name" value="TRNA (GUANINE-N(1)-)-METHYLTRANSFERASE"/>
    <property type="match status" value="1"/>
</dbReference>
<dbReference type="Pfam" id="PF01746">
    <property type="entry name" value="tRNA_m1G_MT"/>
    <property type="match status" value="1"/>
</dbReference>
<dbReference type="PIRSF" id="PIRSF000386">
    <property type="entry name" value="tRNA_mtase"/>
    <property type="match status" value="1"/>
</dbReference>
<dbReference type="SUPFAM" id="SSF75217">
    <property type="entry name" value="alpha/beta knot"/>
    <property type="match status" value="1"/>
</dbReference>
<accession>Q2P651</accession>
<protein>
    <recommendedName>
        <fullName evidence="1">tRNA (guanine-N(1)-)-methyltransferase</fullName>
        <ecNumber evidence="1">2.1.1.228</ecNumber>
    </recommendedName>
    <alternativeName>
        <fullName evidence="1">M1G-methyltransferase</fullName>
    </alternativeName>
    <alternativeName>
        <fullName evidence="1">tRNA [GM37] methyltransferase</fullName>
    </alternativeName>
</protein>
<organism>
    <name type="scientific">Xanthomonas oryzae pv. oryzae (strain MAFF 311018)</name>
    <dbReference type="NCBI Taxonomy" id="342109"/>
    <lineage>
        <taxon>Bacteria</taxon>
        <taxon>Pseudomonadati</taxon>
        <taxon>Pseudomonadota</taxon>
        <taxon>Gammaproteobacteria</taxon>
        <taxon>Lysobacterales</taxon>
        <taxon>Lysobacteraceae</taxon>
        <taxon>Xanthomonas</taxon>
    </lineage>
</organism>
<feature type="chain" id="PRO_0000257491" description="tRNA (guanine-N(1)-)-methyltransferase">
    <location>
        <begin position="1"/>
        <end position="259"/>
    </location>
</feature>
<feature type="binding site" evidence="1">
    <location>
        <position position="113"/>
    </location>
    <ligand>
        <name>S-adenosyl-L-methionine</name>
        <dbReference type="ChEBI" id="CHEBI:59789"/>
    </ligand>
</feature>
<feature type="binding site" evidence="1">
    <location>
        <begin position="133"/>
        <end position="138"/>
    </location>
    <ligand>
        <name>S-adenosyl-L-methionine</name>
        <dbReference type="ChEBI" id="CHEBI:59789"/>
    </ligand>
</feature>
<sequence length="259" mass="28694">MRIDVISLFPEFIAQCAAFGVVGRAQERGLLELQGWNPREHAQGNYRRVDDRPFGGGPGMVMLIEPLRACLDAVQAADARPAPVIYFSPQGRRLTQMLARELAQLPRMVLLCGRYEGVDERFLAQAVDMEISIGDYVLSGGELGAAVVVDVVTRLQEGVLNDAESAAQDSFEGPQGLLDCPHYSHPSSHAWGDVPEVLRSGNHAAIARWRRQQSLGRTWLRRPDLLDEAGLDKHDRRLLEEFRRELAKGDEESGCTPSP</sequence>
<keyword id="KW-0963">Cytoplasm</keyword>
<keyword id="KW-0489">Methyltransferase</keyword>
<keyword id="KW-0949">S-adenosyl-L-methionine</keyword>
<keyword id="KW-0808">Transferase</keyword>
<keyword id="KW-0819">tRNA processing</keyword>